<proteinExistence type="inferred from homology"/>
<organism>
    <name type="scientific">Thermococcus onnurineus (strain NA1)</name>
    <dbReference type="NCBI Taxonomy" id="523850"/>
    <lineage>
        <taxon>Archaea</taxon>
        <taxon>Methanobacteriati</taxon>
        <taxon>Methanobacteriota</taxon>
        <taxon>Thermococci</taxon>
        <taxon>Thermococcales</taxon>
        <taxon>Thermococcaceae</taxon>
        <taxon>Thermococcus</taxon>
    </lineage>
</organism>
<sequence length="430" mass="46818">MENPFEITAVVAREILDSRGNPTVEVEVYTPISMGRAAVPSGASTGTHEALELRDGGKRYHGKGVRRAVENVNKIIAPELIGMDVTWQRDIDTLMLELDGTENKSNLGANAILGVSLAVAKAAANALGLPLYQYIGGTNAYVMPVPMSNVINGGVHAGNELDFQEFMIMPVGADSFREAIRWVSETYHVLKKVIAEKYGKDAINVGDEGGFAPPMKEVTEPLETLIKAIEEAGYKPGDEIALAIDAASSEFYHPDIGKYVVAGKEYTREELVDLYKELVSAYPIVSIEDPFQEEDWEGFKLITRELGGKIQIVGDDLFVTNPKRIRKGIEMGAANALLLKVNQIGTLSEAIDAAYTAFRAGYGVVVSHRSGETEDATIADLAVALNAGQIKTGAPARSDRNAKYNQLIRIEEELEGIAHYPGRKFRNPFF</sequence>
<keyword id="KW-0963">Cytoplasm</keyword>
<keyword id="KW-0324">Glycolysis</keyword>
<keyword id="KW-0456">Lyase</keyword>
<keyword id="KW-0460">Magnesium</keyword>
<keyword id="KW-0479">Metal-binding</keyword>
<keyword id="KW-0964">Secreted</keyword>
<feature type="chain" id="PRO_1000115925" description="Enolase">
    <location>
        <begin position="1"/>
        <end position="430"/>
    </location>
</feature>
<feature type="active site" description="Proton donor" evidence="1">
    <location>
        <position position="208"/>
    </location>
</feature>
<feature type="active site" description="Proton acceptor" evidence="1">
    <location>
        <position position="340"/>
    </location>
</feature>
<feature type="binding site" evidence="1">
    <location>
        <position position="164"/>
    </location>
    <ligand>
        <name>(2R)-2-phosphoglycerate</name>
        <dbReference type="ChEBI" id="CHEBI:58289"/>
    </ligand>
</feature>
<feature type="binding site" evidence="1">
    <location>
        <position position="245"/>
    </location>
    <ligand>
        <name>Mg(2+)</name>
        <dbReference type="ChEBI" id="CHEBI:18420"/>
    </ligand>
</feature>
<feature type="binding site" evidence="1">
    <location>
        <position position="288"/>
    </location>
    <ligand>
        <name>Mg(2+)</name>
        <dbReference type="ChEBI" id="CHEBI:18420"/>
    </ligand>
</feature>
<feature type="binding site" evidence="1">
    <location>
        <position position="315"/>
    </location>
    <ligand>
        <name>Mg(2+)</name>
        <dbReference type="ChEBI" id="CHEBI:18420"/>
    </ligand>
</feature>
<feature type="binding site" evidence="1">
    <location>
        <position position="340"/>
    </location>
    <ligand>
        <name>(2R)-2-phosphoglycerate</name>
        <dbReference type="ChEBI" id="CHEBI:58289"/>
    </ligand>
</feature>
<feature type="binding site" evidence="1">
    <location>
        <position position="369"/>
    </location>
    <ligand>
        <name>(2R)-2-phosphoglycerate</name>
        <dbReference type="ChEBI" id="CHEBI:58289"/>
    </ligand>
</feature>
<feature type="binding site" evidence="1">
    <location>
        <position position="370"/>
    </location>
    <ligand>
        <name>(2R)-2-phosphoglycerate</name>
        <dbReference type="ChEBI" id="CHEBI:58289"/>
    </ligand>
</feature>
<feature type="binding site" evidence="1">
    <location>
        <position position="391"/>
    </location>
    <ligand>
        <name>(2R)-2-phosphoglycerate</name>
        <dbReference type="ChEBI" id="CHEBI:58289"/>
    </ligand>
</feature>
<gene>
    <name evidence="1" type="primary">eno</name>
    <name type="ordered locus">TON_1613</name>
</gene>
<comment type="function">
    <text evidence="1">Catalyzes the reversible conversion of 2-phosphoglycerate (2-PG) into phosphoenolpyruvate (PEP). It is essential for the degradation of carbohydrates via glycolysis.</text>
</comment>
<comment type="catalytic activity">
    <reaction evidence="1">
        <text>(2R)-2-phosphoglycerate = phosphoenolpyruvate + H2O</text>
        <dbReference type="Rhea" id="RHEA:10164"/>
        <dbReference type="ChEBI" id="CHEBI:15377"/>
        <dbReference type="ChEBI" id="CHEBI:58289"/>
        <dbReference type="ChEBI" id="CHEBI:58702"/>
        <dbReference type="EC" id="4.2.1.11"/>
    </reaction>
</comment>
<comment type="cofactor">
    <cofactor evidence="1">
        <name>Mg(2+)</name>
        <dbReference type="ChEBI" id="CHEBI:18420"/>
    </cofactor>
    <text evidence="1">Binds a second Mg(2+) ion via substrate during catalysis.</text>
</comment>
<comment type="pathway">
    <text evidence="1">Carbohydrate degradation; glycolysis; pyruvate from D-glyceraldehyde 3-phosphate: step 4/5.</text>
</comment>
<comment type="subcellular location">
    <subcellularLocation>
        <location evidence="1">Cytoplasm</location>
    </subcellularLocation>
    <subcellularLocation>
        <location evidence="1">Secreted</location>
    </subcellularLocation>
    <subcellularLocation>
        <location evidence="1">Cell surface</location>
    </subcellularLocation>
    <text evidence="1">Fractions of enolase are present in both the cytoplasm and on the cell surface.</text>
</comment>
<comment type="similarity">
    <text evidence="1">Belongs to the enolase family.</text>
</comment>
<evidence type="ECO:0000255" key="1">
    <source>
        <dbReference type="HAMAP-Rule" id="MF_00318"/>
    </source>
</evidence>
<accession>B6YUB8</accession>
<name>ENO_THEON</name>
<dbReference type="EC" id="4.2.1.11" evidence="1"/>
<dbReference type="EMBL" id="CP000855">
    <property type="protein sequence ID" value="ACJ17103.1"/>
    <property type="molecule type" value="Genomic_DNA"/>
</dbReference>
<dbReference type="RefSeq" id="WP_012572575.1">
    <property type="nucleotide sequence ID" value="NC_011529.1"/>
</dbReference>
<dbReference type="SMR" id="B6YUB8"/>
<dbReference type="STRING" id="523850.TON_1613"/>
<dbReference type="GeneID" id="7018652"/>
<dbReference type="KEGG" id="ton:TON_1613"/>
<dbReference type="PATRIC" id="fig|523850.10.peg.1627"/>
<dbReference type="eggNOG" id="arCOG01169">
    <property type="taxonomic scope" value="Archaea"/>
</dbReference>
<dbReference type="HOGENOM" id="CLU_031223_2_1_2"/>
<dbReference type="OrthoDB" id="8680at2157"/>
<dbReference type="UniPathway" id="UPA00109">
    <property type="reaction ID" value="UER00187"/>
</dbReference>
<dbReference type="Proteomes" id="UP000002727">
    <property type="component" value="Chromosome"/>
</dbReference>
<dbReference type="GO" id="GO:0009986">
    <property type="term" value="C:cell surface"/>
    <property type="evidence" value="ECO:0007669"/>
    <property type="project" value="UniProtKB-SubCell"/>
</dbReference>
<dbReference type="GO" id="GO:0005576">
    <property type="term" value="C:extracellular region"/>
    <property type="evidence" value="ECO:0007669"/>
    <property type="project" value="UniProtKB-SubCell"/>
</dbReference>
<dbReference type="GO" id="GO:0000015">
    <property type="term" value="C:phosphopyruvate hydratase complex"/>
    <property type="evidence" value="ECO:0007669"/>
    <property type="project" value="InterPro"/>
</dbReference>
<dbReference type="GO" id="GO:0000287">
    <property type="term" value="F:magnesium ion binding"/>
    <property type="evidence" value="ECO:0007669"/>
    <property type="project" value="UniProtKB-UniRule"/>
</dbReference>
<dbReference type="GO" id="GO:0004634">
    <property type="term" value="F:phosphopyruvate hydratase activity"/>
    <property type="evidence" value="ECO:0007669"/>
    <property type="project" value="UniProtKB-UniRule"/>
</dbReference>
<dbReference type="GO" id="GO:0006096">
    <property type="term" value="P:glycolytic process"/>
    <property type="evidence" value="ECO:0007669"/>
    <property type="project" value="UniProtKB-UniRule"/>
</dbReference>
<dbReference type="CDD" id="cd03313">
    <property type="entry name" value="enolase"/>
    <property type="match status" value="1"/>
</dbReference>
<dbReference type="FunFam" id="3.30.390.10:FF:000001">
    <property type="entry name" value="Enolase"/>
    <property type="match status" value="1"/>
</dbReference>
<dbReference type="Gene3D" id="3.20.20.120">
    <property type="entry name" value="Enolase-like C-terminal domain"/>
    <property type="match status" value="1"/>
</dbReference>
<dbReference type="Gene3D" id="3.30.390.10">
    <property type="entry name" value="Enolase-like, N-terminal domain"/>
    <property type="match status" value="1"/>
</dbReference>
<dbReference type="HAMAP" id="MF_00318">
    <property type="entry name" value="Enolase"/>
    <property type="match status" value="1"/>
</dbReference>
<dbReference type="InterPro" id="IPR000941">
    <property type="entry name" value="Enolase"/>
</dbReference>
<dbReference type="InterPro" id="IPR036849">
    <property type="entry name" value="Enolase-like_C_sf"/>
</dbReference>
<dbReference type="InterPro" id="IPR029017">
    <property type="entry name" value="Enolase-like_N"/>
</dbReference>
<dbReference type="InterPro" id="IPR020810">
    <property type="entry name" value="Enolase_C"/>
</dbReference>
<dbReference type="InterPro" id="IPR020809">
    <property type="entry name" value="Enolase_CS"/>
</dbReference>
<dbReference type="InterPro" id="IPR020811">
    <property type="entry name" value="Enolase_N"/>
</dbReference>
<dbReference type="NCBIfam" id="TIGR01060">
    <property type="entry name" value="eno"/>
    <property type="match status" value="1"/>
</dbReference>
<dbReference type="PANTHER" id="PTHR11902">
    <property type="entry name" value="ENOLASE"/>
    <property type="match status" value="1"/>
</dbReference>
<dbReference type="PANTHER" id="PTHR11902:SF1">
    <property type="entry name" value="ENOLASE"/>
    <property type="match status" value="1"/>
</dbReference>
<dbReference type="Pfam" id="PF00113">
    <property type="entry name" value="Enolase_C"/>
    <property type="match status" value="1"/>
</dbReference>
<dbReference type="Pfam" id="PF03952">
    <property type="entry name" value="Enolase_N"/>
    <property type="match status" value="1"/>
</dbReference>
<dbReference type="PIRSF" id="PIRSF001400">
    <property type="entry name" value="Enolase"/>
    <property type="match status" value="1"/>
</dbReference>
<dbReference type="PRINTS" id="PR00148">
    <property type="entry name" value="ENOLASE"/>
</dbReference>
<dbReference type="SFLD" id="SFLDF00002">
    <property type="entry name" value="enolase"/>
    <property type="match status" value="1"/>
</dbReference>
<dbReference type="SFLD" id="SFLDG00178">
    <property type="entry name" value="enolase"/>
    <property type="match status" value="1"/>
</dbReference>
<dbReference type="SMART" id="SM01192">
    <property type="entry name" value="Enolase_C"/>
    <property type="match status" value="1"/>
</dbReference>
<dbReference type="SMART" id="SM01193">
    <property type="entry name" value="Enolase_N"/>
    <property type="match status" value="1"/>
</dbReference>
<dbReference type="SUPFAM" id="SSF51604">
    <property type="entry name" value="Enolase C-terminal domain-like"/>
    <property type="match status" value="1"/>
</dbReference>
<dbReference type="SUPFAM" id="SSF54826">
    <property type="entry name" value="Enolase N-terminal domain-like"/>
    <property type="match status" value="1"/>
</dbReference>
<dbReference type="PROSITE" id="PS00164">
    <property type="entry name" value="ENOLASE"/>
    <property type="match status" value="1"/>
</dbReference>
<reference key="1">
    <citation type="journal article" date="2008" name="J. Bacteriol.">
        <title>The complete genome sequence of Thermococcus onnurineus NA1 reveals a mixed heterotrophic and carboxydotrophic metabolism.</title>
        <authorList>
            <person name="Lee H.S."/>
            <person name="Kang S.G."/>
            <person name="Bae S.S."/>
            <person name="Lim J.K."/>
            <person name="Cho Y."/>
            <person name="Kim Y.J."/>
            <person name="Jeon J.H."/>
            <person name="Cha S.-S."/>
            <person name="Kwon K.K."/>
            <person name="Kim H.-T."/>
            <person name="Park C.-J."/>
            <person name="Lee H.-W."/>
            <person name="Kim S.I."/>
            <person name="Chun J."/>
            <person name="Colwell R.R."/>
            <person name="Kim S.-J."/>
            <person name="Lee J.-H."/>
        </authorList>
    </citation>
    <scope>NUCLEOTIDE SEQUENCE [LARGE SCALE GENOMIC DNA]</scope>
    <source>
        <strain>NA1</strain>
    </source>
</reference>
<protein>
    <recommendedName>
        <fullName evidence="1">Enolase</fullName>
        <ecNumber evidence="1">4.2.1.11</ecNumber>
    </recommendedName>
    <alternativeName>
        <fullName evidence="1">2-phospho-D-glycerate hydro-lyase</fullName>
    </alternativeName>
    <alternativeName>
        <fullName evidence="1">2-phosphoglycerate dehydratase</fullName>
    </alternativeName>
</protein>